<name>RL20_KINRD</name>
<protein>
    <recommendedName>
        <fullName evidence="1">Large ribosomal subunit protein bL20</fullName>
    </recommendedName>
    <alternativeName>
        <fullName evidence="2">50S ribosomal protein L20</fullName>
    </alternativeName>
</protein>
<comment type="function">
    <text evidence="1">Binds directly to 23S ribosomal RNA and is necessary for the in vitro assembly process of the 50S ribosomal subunit. It is not involved in the protein synthesizing functions of that subunit.</text>
</comment>
<comment type="similarity">
    <text evidence="1">Belongs to the bacterial ribosomal protein bL20 family.</text>
</comment>
<organism>
    <name type="scientific">Kineococcus radiotolerans (strain ATCC BAA-149 / DSM 14245 / SRS30216)</name>
    <dbReference type="NCBI Taxonomy" id="266940"/>
    <lineage>
        <taxon>Bacteria</taxon>
        <taxon>Bacillati</taxon>
        <taxon>Actinomycetota</taxon>
        <taxon>Actinomycetes</taxon>
        <taxon>Kineosporiales</taxon>
        <taxon>Kineosporiaceae</taxon>
        <taxon>Kineococcus</taxon>
    </lineage>
</organism>
<proteinExistence type="inferred from homology"/>
<dbReference type="EMBL" id="CP000750">
    <property type="protein sequence ID" value="ABS04631.1"/>
    <property type="molecule type" value="Genomic_DNA"/>
</dbReference>
<dbReference type="RefSeq" id="WP_012087116.1">
    <property type="nucleotide sequence ID" value="NC_009664.2"/>
</dbReference>
<dbReference type="SMR" id="A6WCU2"/>
<dbReference type="STRING" id="266940.Krad_3167"/>
<dbReference type="KEGG" id="kra:Krad_3167"/>
<dbReference type="eggNOG" id="COG0292">
    <property type="taxonomic scope" value="Bacteria"/>
</dbReference>
<dbReference type="HOGENOM" id="CLU_123265_0_0_11"/>
<dbReference type="OrthoDB" id="9808966at2"/>
<dbReference type="Proteomes" id="UP000001116">
    <property type="component" value="Chromosome"/>
</dbReference>
<dbReference type="GO" id="GO:1990904">
    <property type="term" value="C:ribonucleoprotein complex"/>
    <property type="evidence" value="ECO:0007669"/>
    <property type="project" value="UniProtKB-KW"/>
</dbReference>
<dbReference type="GO" id="GO:0005840">
    <property type="term" value="C:ribosome"/>
    <property type="evidence" value="ECO:0007669"/>
    <property type="project" value="UniProtKB-KW"/>
</dbReference>
<dbReference type="GO" id="GO:0019843">
    <property type="term" value="F:rRNA binding"/>
    <property type="evidence" value="ECO:0007669"/>
    <property type="project" value="UniProtKB-UniRule"/>
</dbReference>
<dbReference type="GO" id="GO:0003735">
    <property type="term" value="F:structural constituent of ribosome"/>
    <property type="evidence" value="ECO:0007669"/>
    <property type="project" value="InterPro"/>
</dbReference>
<dbReference type="GO" id="GO:0000027">
    <property type="term" value="P:ribosomal large subunit assembly"/>
    <property type="evidence" value="ECO:0007669"/>
    <property type="project" value="UniProtKB-UniRule"/>
</dbReference>
<dbReference type="GO" id="GO:0006412">
    <property type="term" value="P:translation"/>
    <property type="evidence" value="ECO:0007669"/>
    <property type="project" value="InterPro"/>
</dbReference>
<dbReference type="CDD" id="cd07026">
    <property type="entry name" value="Ribosomal_L20"/>
    <property type="match status" value="1"/>
</dbReference>
<dbReference type="FunFam" id="1.10.1900.20:FF:000001">
    <property type="entry name" value="50S ribosomal protein L20"/>
    <property type="match status" value="1"/>
</dbReference>
<dbReference type="Gene3D" id="6.10.160.10">
    <property type="match status" value="1"/>
</dbReference>
<dbReference type="Gene3D" id="1.10.1900.20">
    <property type="entry name" value="Ribosomal protein L20"/>
    <property type="match status" value="1"/>
</dbReference>
<dbReference type="HAMAP" id="MF_00382">
    <property type="entry name" value="Ribosomal_bL20"/>
    <property type="match status" value="1"/>
</dbReference>
<dbReference type="InterPro" id="IPR005813">
    <property type="entry name" value="Ribosomal_bL20"/>
</dbReference>
<dbReference type="InterPro" id="IPR049946">
    <property type="entry name" value="RIBOSOMAL_L20_CS"/>
</dbReference>
<dbReference type="InterPro" id="IPR035566">
    <property type="entry name" value="Ribosomal_protein_bL20_C"/>
</dbReference>
<dbReference type="NCBIfam" id="TIGR01032">
    <property type="entry name" value="rplT_bact"/>
    <property type="match status" value="1"/>
</dbReference>
<dbReference type="PANTHER" id="PTHR10986">
    <property type="entry name" value="39S RIBOSOMAL PROTEIN L20"/>
    <property type="match status" value="1"/>
</dbReference>
<dbReference type="Pfam" id="PF00453">
    <property type="entry name" value="Ribosomal_L20"/>
    <property type="match status" value="1"/>
</dbReference>
<dbReference type="PRINTS" id="PR00062">
    <property type="entry name" value="RIBOSOMALL20"/>
</dbReference>
<dbReference type="SUPFAM" id="SSF74731">
    <property type="entry name" value="Ribosomal protein L20"/>
    <property type="match status" value="1"/>
</dbReference>
<dbReference type="PROSITE" id="PS00937">
    <property type="entry name" value="RIBOSOMAL_L20"/>
    <property type="match status" value="1"/>
</dbReference>
<evidence type="ECO:0000255" key="1">
    <source>
        <dbReference type="HAMAP-Rule" id="MF_00382"/>
    </source>
</evidence>
<evidence type="ECO:0000305" key="2"/>
<feature type="chain" id="PRO_1000080077" description="Large ribosomal subunit protein bL20">
    <location>
        <begin position="1"/>
        <end position="129"/>
    </location>
</feature>
<reference key="1">
    <citation type="journal article" date="2008" name="PLoS ONE">
        <title>Survival in nuclear waste, extreme resistance, and potential applications gleaned from the genome sequence of Kineococcus radiotolerans SRS30216.</title>
        <authorList>
            <person name="Bagwell C.E."/>
            <person name="Bhat S."/>
            <person name="Hawkins G.M."/>
            <person name="Smith B.W."/>
            <person name="Biswas T."/>
            <person name="Hoover T.R."/>
            <person name="Saunders E."/>
            <person name="Han C.S."/>
            <person name="Tsodikov O.V."/>
            <person name="Shimkets L.J."/>
        </authorList>
    </citation>
    <scope>NUCLEOTIDE SEQUENCE [LARGE SCALE GENOMIC DNA]</scope>
    <source>
        <strain>ATCC BAA-149 / DSM 14245 / SRS30216</strain>
    </source>
</reference>
<keyword id="KW-1185">Reference proteome</keyword>
<keyword id="KW-0687">Ribonucleoprotein</keyword>
<keyword id="KW-0689">Ribosomal protein</keyword>
<keyword id="KW-0694">RNA-binding</keyword>
<keyword id="KW-0699">rRNA-binding</keyword>
<gene>
    <name evidence="1" type="primary">rplT</name>
    <name type="ordered locus">Krad_3167</name>
</gene>
<sequence>MARVKRAVNAQKKRRTVLEQASGYRGQRSRLYRKAKEQVTHSLVYAYRDRKARKGDFRRLWIQRINAAARAEGMTYNRFIQGLKAAEIEVDRRMLAELAVSDPAAFGALVRTAKAALPVAPVAAEGTAA</sequence>
<accession>A6WCU2</accession>